<reference key="1">
    <citation type="journal article" date="2007" name="Toxicon">
        <title>Vespid chemotactic peptide precursor from the wasp, Vespa magnifica (Smith).</title>
        <authorList>
            <person name="Yu H."/>
            <person name="Yang H."/>
            <person name="Ma D."/>
            <person name="Lv Y."/>
            <person name="Liu T."/>
            <person name="Zhang K."/>
            <person name="Lai R."/>
            <person name="Liu J."/>
        </authorList>
    </citation>
    <scope>NUCLEOTIDE SEQUENCE [MRNA]</scope>
    <scope>PROTEIN SEQUENCE OF 50-62</scope>
    <scope>FUNCTION</scope>
    <scope>AMIDATION AT LEU-62</scope>
    <scope>SUBCELLULAR LOCATION</scope>
    <source>
        <tissue>Venom</tissue>
        <tissue>Venom gland</tissue>
    </source>
</reference>
<protein>
    <recommendedName>
        <fullName evidence="7">Vespid chemotactic peptide 5h</fullName>
        <shortName evidence="7">VCP 5h</shortName>
    </recommendedName>
</protein>
<name>CRBLH_VESMG</name>
<dbReference type="EMBL" id="DQ865261">
    <property type="protein sequence ID" value="ABI94580.1"/>
    <property type="molecule type" value="mRNA"/>
</dbReference>
<dbReference type="GO" id="GO:0005576">
    <property type="term" value="C:extracellular region"/>
    <property type="evidence" value="ECO:0007669"/>
    <property type="project" value="UniProtKB-SubCell"/>
</dbReference>
<dbReference type="GO" id="GO:0090729">
    <property type="term" value="F:toxin activity"/>
    <property type="evidence" value="ECO:0007669"/>
    <property type="project" value="UniProtKB-KW"/>
</dbReference>
<dbReference type="GO" id="GO:0006935">
    <property type="term" value="P:chemotaxis"/>
    <property type="evidence" value="ECO:0007669"/>
    <property type="project" value="UniProtKB-KW"/>
</dbReference>
<dbReference type="GO" id="GO:0042742">
    <property type="term" value="P:defense response to bacterium"/>
    <property type="evidence" value="ECO:0007669"/>
    <property type="project" value="UniProtKB-KW"/>
</dbReference>
<dbReference type="GO" id="GO:0050832">
    <property type="term" value="P:defense response to fungus"/>
    <property type="evidence" value="ECO:0007669"/>
    <property type="project" value="UniProtKB-KW"/>
</dbReference>
<dbReference type="GO" id="GO:0045087">
    <property type="term" value="P:innate immune response"/>
    <property type="evidence" value="ECO:0007669"/>
    <property type="project" value="UniProtKB-KW"/>
</dbReference>
<dbReference type="GO" id="GO:0031640">
    <property type="term" value="P:killing of cells of another organism"/>
    <property type="evidence" value="ECO:0007669"/>
    <property type="project" value="UniProtKB-KW"/>
</dbReference>
<sequence length="65" mass="6621">MKYNIVFLFAIIASLACLQLTFAAPAASPLANPGASPDAAPNADPLADPFLPIIGKLLSGLLGKK</sequence>
<feature type="signal peptide" evidence="5">
    <location>
        <begin position="1"/>
        <end position="23"/>
    </location>
</feature>
<feature type="propeptide" id="PRO_0000305122" evidence="6">
    <location>
        <begin position="24"/>
        <end position="49"/>
    </location>
</feature>
<feature type="peptide" id="PRO_0000305123" description="Vespid chemotactic peptide 5h" evidence="6">
    <location>
        <begin position="50"/>
        <end position="62"/>
    </location>
</feature>
<feature type="repeat" description="AXPX 1" evidence="8">
    <location>
        <begin position="23"/>
        <end position="26"/>
    </location>
</feature>
<feature type="repeat" description="AXPX 2" evidence="8">
    <location>
        <begin position="27"/>
        <end position="30"/>
    </location>
</feature>
<feature type="repeat" description="AXPX 3" evidence="8">
    <location>
        <begin position="31"/>
        <end position="34"/>
    </location>
</feature>
<feature type="repeat" description="AXPX 4" evidence="8">
    <location>
        <begin position="35"/>
        <end position="38"/>
    </location>
</feature>
<feature type="repeat" description="AXPX 5" evidence="8">
    <location>
        <begin position="39"/>
        <end position="42"/>
    </location>
</feature>
<feature type="repeat" description="AXPX 6" evidence="8">
    <location>
        <begin position="43"/>
        <end position="46"/>
    </location>
</feature>
<feature type="repeat" description="AXPX 7" evidence="8">
    <location>
        <begin position="47"/>
        <end position="50"/>
    </location>
</feature>
<feature type="modified residue" description="Leucine amide" evidence="6">
    <location>
        <position position="62"/>
    </location>
</feature>
<evidence type="ECO:0000250" key="1">
    <source>
        <dbReference type="UniProtKB" id="P01514"/>
    </source>
</evidence>
<evidence type="ECO:0000250" key="2">
    <source>
        <dbReference type="UniProtKB" id="P0DRA0"/>
    </source>
</evidence>
<evidence type="ECO:0000250" key="3">
    <source>
        <dbReference type="UniProtKB" id="P17232"/>
    </source>
</evidence>
<evidence type="ECO:0000250" key="4">
    <source>
        <dbReference type="UniProtKB" id="P84914"/>
    </source>
</evidence>
<evidence type="ECO:0000255" key="5"/>
<evidence type="ECO:0000269" key="6">
    <source>
    </source>
</evidence>
<evidence type="ECO:0000303" key="7">
    <source>
    </source>
</evidence>
<evidence type="ECO:0000305" key="8"/>
<evidence type="ECO:0000305" key="9">
    <source>
    </source>
</evidence>
<organism>
    <name type="scientific">Vespa magnifica</name>
    <name type="common">Hornet</name>
    <dbReference type="NCBI Taxonomy" id="202807"/>
    <lineage>
        <taxon>Eukaryota</taxon>
        <taxon>Metazoa</taxon>
        <taxon>Ecdysozoa</taxon>
        <taxon>Arthropoda</taxon>
        <taxon>Hexapoda</taxon>
        <taxon>Insecta</taxon>
        <taxon>Pterygota</taxon>
        <taxon>Neoptera</taxon>
        <taxon>Endopterygota</taxon>
        <taxon>Hymenoptera</taxon>
        <taxon>Apocrita</taxon>
        <taxon>Aculeata</taxon>
        <taxon>Vespoidea</taxon>
        <taxon>Vespidae</taxon>
        <taxon>Vespinae</taxon>
        <taxon>Vespa</taxon>
    </lineage>
</organism>
<accession>A0SPI1</accession>
<comment type="function">
    <text evidence="1 2 3 4 6">Shows antimicrobial activity against the Gram-negative bacteria E.coli ATCC 25922 (MIC=30 ug/ml), the Gram-positive bacteria S.aureus ATCC 2592 (MIC=5 ug/ml) and the fungus C.albicans ATCC 2002 (MIC=25 ug/ml) (PubMed:17573088). Acts as a mast cell degranulating peptide (By similarity). Its mast cell degranulation activity may be related to the activation of G-protein coupled receptors in mast cells as well as interaction with other proteins located in cell endosomal membranes in the mast cells (By similarity). Induces the chemotaxis of neutrophils (By similarity).</text>
</comment>
<comment type="subcellular location">
    <subcellularLocation>
        <location evidence="6">Secreted</location>
    </subcellularLocation>
</comment>
<comment type="tissue specificity">
    <text evidence="9">Expressed by the venom gland.</text>
</comment>
<comment type="miscellaneous">
    <text evidence="8">The primary structure of this mature peptide is identical to that of Vespid chemotactic peptide M from Vespa mandarinia (AC P17232), and Vespid chemotactic peptide VT1 from Vespa tropica (AC P0DRA0).</text>
</comment>
<comment type="similarity">
    <text evidence="8">Belongs to the MCD family. Crabrolin subfamily.</text>
</comment>
<proteinExistence type="evidence at protein level"/>
<keyword id="KW-0027">Amidation</keyword>
<keyword id="KW-0044">Antibiotic</keyword>
<keyword id="KW-0929">Antimicrobial</keyword>
<keyword id="KW-0145">Chemotaxis</keyword>
<keyword id="KW-0903">Direct protein sequencing</keyword>
<keyword id="KW-0295">Fungicide</keyword>
<keyword id="KW-1213">G-protein coupled receptor impairing toxin</keyword>
<keyword id="KW-0391">Immunity</keyword>
<keyword id="KW-0399">Innate immunity</keyword>
<keyword id="KW-0467">Mast cell degranulation</keyword>
<keyword id="KW-0677">Repeat</keyword>
<keyword id="KW-0964">Secreted</keyword>
<keyword id="KW-0732">Signal</keyword>
<keyword id="KW-0800">Toxin</keyword>